<evidence type="ECO:0000255" key="1">
    <source>
        <dbReference type="HAMAP-Rule" id="MF_00095"/>
    </source>
</evidence>
<dbReference type="EMBL" id="CP001657">
    <property type="protein sequence ID" value="ACT14136.1"/>
    <property type="molecule type" value="Genomic_DNA"/>
</dbReference>
<dbReference type="RefSeq" id="WP_015841282.1">
    <property type="nucleotide sequence ID" value="NC_012917.1"/>
</dbReference>
<dbReference type="SMR" id="C6DC42"/>
<dbReference type="STRING" id="561230.PC1_3113"/>
<dbReference type="KEGG" id="pct:PC1_3113"/>
<dbReference type="eggNOG" id="COG1489">
    <property type="taxonomic scope" value="Bacteria"/>
</dbReference>
<dbReference type="HOGENOM" id="CLU_052299_2_0_6"/>
<dbReference type="OrthoDB" id="9802365at2"/>
<dbReference type="Proteomes" id="UP000002736">
    <property type="component" value="Chromosome"/>
</dbReference>
<dbReference type="GO" id="GO:0003677">
    <property type="term" value="F:DNA binding"/>
    <property type="evidence" value="ECO:0007669"/>
    <property type="project" value="InterPro"/>
</dbReference>
<dbReference type="CDD" id="cd22359">
    <property type="entry name" value="SfsA-like_bacterial"/>
    <property type="match status" value="1"/>
</dbReference>
<dbReference type="FunFam" id="2.40.50.580:FF:000001">
    <property type="entry name" value="Sugar fermentation stimulation protein A"/>
    <property type="match status" value="1"/>
</dbReference>
<dbReference type="FunFam" id="3.40.1350.60:FF:000001">
    <property type="entry name" value="Sugar fermentation stimulation protein A"/>
    <property type="match status" value="1"/>
</dbReference>
<dbReference type="Gene3D" id="2.40.50.580">
    <property type="match status" value="1"/>
</dbReference>
<dbReference type="Gene3D" id="3.40.1350.60">
    <property type="match status" value="1"/>
</dbReference>
<dbReference type="HAMAP" id="MF_00095">
    <property type="entry name" value="SfsA"/>
    <property type="match status" value="1"/>
</dbReference>
<dbReference type="InterPro" id="IPR005224">
    <property type="entry name" value="SfsA"/>
</dbReference>
<dbReference type="InterPro" id="IPR040452">
    <property type="entry name" value="SfsA_C"/>
</dbReference>
<dbReference type="InterPro" id="IPR041465">
    <property type="entry name" value="SfsA_N"/>
</dbReference>
<dbReference type="NCBIfam" id="TIGR00230">
    <property type="entry name" value="sfsA"/>
    <property type="match status" value="1"/>
</dbReference>
<dbReference type="PANTHER" id="PTHR30545">
    <property type="entry name" value="SUGAR FERMENTATION STIMULATION PROTEIN A"/>
    <property type="match status" value="1"/>
</dbReference>
<dbReference type="PANTHER" id="PTHR30545:SF2">
    <property type="entry name" value="SUGAR FERMENTATION STIMULATION PROTEIN A"/>
    <property type="match status" value="1"/>
</dbReference>
<dbReference type="Pfam" id="PF03749">
    <property type="entry name" value="SfsA"/>
    <property type="match status" value="1"/>
</dbReference>
<dbReference type="Pfam" id="PF17746">
    <property type="entry name" value="SfsA_N"/>
    <property type="match status" value="1"/>
</dbReference>
<proteinExistence type="inferred from homology"/>
<feature type="chain" id="PRO_1000202724" description="Sugar fermentation stimulation protein homolog">
    <location>
        <begin position="1"/>
        <end position="234"/>
    </location>
</feature>
<name>SFSA_PECCP</name>
<protein>
    <recommendedName>
        <fullName evidence="1">Sugar fermentation stimulation protein homolog</fullName>
    </recommendedName>
</protein>
<accession>C6DC42</accession>
<comment type="similarity">
    <text evidence="1">Belongs to the SfsA family.</text>
</comment>
<organism>
    <name type="scientific">Pectobacterium carotovorum subsp. carotovorum (strain PC1)</name>
    <dbReference type="NCBI Taxonomy" id="561230"/>
    <lineage>
        <taxon>Bacteria</taxon>
        <taxon>Pseudomonadati</taxon>
        <taxon>Pseudomonadota</taxon>
        <taxon>Gammaproteobacteria</taxon>
        <taxon>Enterobacterales</taxon>
        <taxon>Pectobacteriaceae</taxon>
        <taxon>Pectobacterium</taxon>
    </lineage>
</organism>
<gene>
    <name evidence="1" type="primary">sfsA</name>
    <name type="ordered locus">PC1_3113</name>
</gene>
<sequence>MDYTPRLQPARLIKRYKRFLADVVTPEGETLTLHCANTGAMTGCATPGDTVWYSTSDNPKRKYPHSWELTETQQNHWICVNTLRANTLLYEALLENRVEELSGYSDVKTEVRYGTENSRVDLLLQAPDKIDCYIEVKSVTLLQHECGYFPDAVTLRGQKHLRELQQMVSNGKRAVLFFAVLHSGIQQVSPARHIDSRYAELFTEAQRAGVEILCYGSTLCPDGITLTHKLPLLG</sequence>
<reference key="1">
    <citation type="submission" date="2009-07" db="EMBL/GenBank/DDBJ databases">
        <title>Complete sequence of Pectobacterium carotovorum subsp. carotovorum PC1.</title>
        <authorList>
            <consortium name="US DOE Joint Genome Institute"/>
            <person name="Lucas S."/>
            <person name="Copeland A."/>
            <person name="Lapidus A."/>
            <person name="Glavina del Rio T."/>
            <person name="Tice H."/>
            <person name="Bruce D."/>
            <person name="Goodwin L."/>
            <person name="Pitluck S."/>
            <person name="Munk A.C."/>
            <person name="Brettin T."/>
            <person name="Detter J.C."/>
            <person name="Han C."/>
            <person name="Tapia R."/>
            <person name="Larimer F."/>
            <person name="Land M."/>
            <person name="Hauser L."/>
            <person name="Kyrpides N."/>
            <person name="Mikhailova N."/>
            <person name="Balakrishnan V."/>
            <person name="Glasner J."/>
            <person name="Perna N.T."/>
        </authorList>
    </citation>
    <scope>NUCLEOTIDE SEQUENCE [LARGE SCALE GENOMIC DNA]</scope>
    <source>
        <strain>PC1</strain>
    </source>
</reference>